<keyword id="KW-0066">ATP synthesis</keyword>
<keyword id="KW-0067">ATP-binding</keyword>
<keyword id="KW-0997">Cell inner membrane</keyword>
<keyword id="KW-1003">Cell membrane</keyword>
<keyword id="KW-0139">CF(1)</keyword>
<keyword id="KW-0375">Hydrogen ion transport</keyword>
<keyword id="KW-0406">Ion transport</keyword>
<keyword id="KW-0472">Membrane</keyword>
<keyword id="KW-0547">Nucleotide-binding</keyword>
<keyword id="KW-1185">Reference proteome</keyword>
<keyword id="KW-1278">Translocase</keyword>
<keyword id="KW-0813">Transport</keyword>
<gene>
    <name evidence="1" type="primary">atpD1</name>
    <name type="ordered locus">Ping_0463</name>
</gene>
<comment type="function">
    <text evidence="1">Produces ATP from ADP in the presence of a proton gradient across the membrane. The catalytic sites are hosted primarily by the beta subunits.</text>
</comment>
<comment type="catalytic activity">
    <reaction evidence="1">
        <text>ATP + H2O + 4 H(+)(in) = ADP + phosphate + 5 H(+)(out)</text>
        <dbReference type="Rhea" id="RHEA:57720"/>
        <dbReference type="ChEBI" id="CHEBI:15377"/>
        <dbReference type="ChEBI" id="CHEBI:15378"/>
        <dbReference type="ChEBI" id="CHEBI:30616"/>
        <dbReference type="ChEBI" id="CHEBI:43474"/>
        <dbReference type="ChEBI" id="CHEBI:456216"/>
        <dbReference type="EC" id="7.1.2.2"/>
    </reaction>
</comment>
<comment type="subunit">
    <text evidence="1">F-type ATPases have 2 components, CF(1) - the catalytic core - and CF(0) - the membrane proton channel. CF(1) has five subunits: alpha(3), beta(3), gamma(1), delta(1), epsilon(1). CF(0) has three main subunits: a(1), b(2) and c(9-12). The alpha and beta chains form an alternating ring which encloses part of the gamma chain. CF(1) is attached to CF(0) by a central stalk formed by the gamma and epsilon chains, while a peripheral stalk is formed by the delta and b chains.</text>
</comment>
<comment type="subcellular location">
    <subcellularLocation>
        <location evidence="1">Cell inner membrane</location>
        <topology evidence="1">Peripheral membrane protein</topology>
    </subcellularLocation>
</comment>
<comment type="similarity">
    <text evidence="1">Belongs to the ATPase alpha/beta chains family.</text>
</comment>
<sequence length="485" mass="53353">MLKDPKQVHAPNFGVVVSVRGSVVDIRFDESLPPIHRLLRVVGIFIVIEVLAQRDARVVRGIALTPTQGLARGMRVEDSGGPLTAPVGKAIISRMFDVFGNTIDNGPLLNNVQWRSVHRAPPTLSQRSTQSEIFVTGIKVIDVLVPLERGGKAGLFGGAGVGKTVLLTEMIHNMVSHHNGISIFCGIGERSREGEELYREMKEAGVLPNMVMIFGQMNEPPGARFRVGHAALTMAEYFRDDESRDVLLLIDNIFRFIQAGSEISGLMGQMPSRLGYQPTMGSELSSLEERIANTEDGAITSIQAVYVPADDFTDPAAVHTFSHLSASIVLSRQRASEGLYPSIDPLQSSSKMATAGIIGERHYNLAQEVRRTLAKYDDLKDIIAMLGLEQLNVDDRKLVGRARRLERFFTQPFFSTEQFSTMEGKLVSLDDALDGCERILADEFADYPESALYMIGAVDEVKINNKAAQHTKQQKEKNNGSTDVN</sequence>
<name>ATPB1_PSYIN</name>
<organism>
    <name type="scientific">Psychromonas ingrahamii (strain DSM 17664 / CCUG 51855 / 37)</name>
    <dbReference type="NCBI Taxonomy" id="357804"/>
    <lineage>
        <taxon>Bacteria</taxon>
        <taxon>Pseudomonadati</taxon>
        <taxon>Pseudomonadota</taxon>
        <taxon>Gammaproteobacteria</taxon>
        <taxon>Alteromonadales</taxon>
        <taxon>Psychromonadaceae</taxon>
        <taxon>Psychromonas</taxon>
    </lineage>
</organism>
<reference key="1">
    <citation type="journal article" date="2008" name="BMC Genomics">
        <title>Genomics of an extreme psychrophile, Psychromonas ingrahamii.</title>
        <authorList>
            <person name="Riley M."/>
            <person name="Staley J.T."/>
            <person name="Danchin A."/>
            <person name="Wang T.Z."/>
            <person name="Brettin T.S."/>
            <person name="Hauser L.J."/>
            <person name="Land M.L."/>
            <person name="Thompson L.S."/>
        </authorList>
    </citation>
    <scope>NUCLEOTIDE SEQUENCE [LARGE SCALE GENOMIC DNA]</scope>
    <source>
        <strain>DSM 17664 / CCUG 51855 / 37</strain>
    </source>
</reference>
<dbReference type="EC" id="7.1.2.2" evidence="1"/>
<dbReference type="EMBL" id="CP000510">
    <property type="protein sequence ID" value="ABM02320.1"/>
    <property type="molecule type" value="Genomic_DNA"/>
</dbReference>
<dbReference type="RefSeq" id="WP_011768879.1">
    <property type="nucleotide sequence ID" value="NC_008709.1"/>
</dbReference>
<dbReference type="SMR" id="A1SS55"/>
<dbReference type="STRING" id="357804.Ping_0463"/>
<dbReference type="KEGG" id="pin:Ping_0463"/>
<dbReference type="eggNOG" id="COG0055">
    <property type="taxonomic scope" value="Bacteria"/>
</dbReference>
<dbReference type="HOGENOM" id="CLU_022398_0_2_6"/>
<dbReference type="OrthoDB" id="9801639at2"/>
<dbReference type="Proteomes" id="UP000000639">
    <property type="component" value="Chromosome"/>
</dbReference>
<dbReference type="GO" id="GO:0005886">
    <property type="term" value="C:plasma membrane"/>
    <property type="evidence" value="ECO:0007669"/>
    <property type="project" value="UniProtKB-SubCell"/>
</dbReference>
<dbReference type="GO" id="GO:0045259">
    <property type="term" value="C:proton-transporting ATP synthase complex"/>
    <property type="evidence" value="ECO:0007669"/>
    <property type="project" value="UniProtKB-KW"/>
</dbReference>
<dbReference type="GO" id="GO:0005524">
    <property type="term" value="F:ATP binding"/>
    <property type="evidence" value="ECO:0007669"/>
    <property type="project" value="UniProtKB-UniRule"/>
</dbReference>
<dbReference type="GO" id="GO:0016887">
    <property type="term" value="F:ATP hydrolysis activity"/>
    <property type="evidence" value="ECO:0007669"/>
    <property type="project" value="InterPro"/>
</dbReference>
<dbReference type="GO" id="GO:0046933">
    <property type="term" value="F:proton-transporting ATP synthase activity, rotational mechanism"/>
    <property type="evidence" value="ECO:0007669"/>
    <property type="project" value="UniProtKB-UniRule"/>
</dbReference>
<dbReference type="GO" id="GO:0046961">
    <property type="term" value="F:proton-transporting ATPase activity, rotational mechanism"/>
    <property type="evidence" value="ECO:0007669"/>
    <property type="project" value="InterPro"/>
</dbReference>
<dbReference type="CDD" id="cd18110">
    <property type="entry name" value="ATP-synt_F1_beta_C"/>
    <property type="match status" value="1"/>
</dbReference>
<dbReference type="CDD" id="cd01133">
    <property type="entry name" value="F1-ATPase_beta_CD"/>
    <property type="match status" value="1"/>
</dbReference>
<dbReference type="FunFam" id="1.10.1140.10:FF:000006">
    <property type="entry name" value="ATP synthase subunit beta"/>
    <property type="match status" value="1"/>
</dbReference>
<dbReference type="FunFam" id="3.40.50.300:FF:001630">
    <property type="entry name" value="ATP synthase subunit beta"/>
    <property type="match status" value="1"/>
</dbReference>
<dbReference type="Gene3D" id="2.40.10.170">
    <property type="match status" value="1"/>
</dbReference>
<dbReference type="Gene3D" id="1.10.1140.10">
    <property type="entry name" value="Bovine Mitochondrial F1-atpase, Atp Synthase Beta Chain, Chain D, domain 3"/>
    <property type="match status" value="1"/>
</dbReference>
<dbReference type="Gene3D" id="3.40.50.300">
    <property type="entry name" value="P-loop containing nucleotide triphosphate hydrolases"/>
    <property type="match status" value="1"/>
</dbReference>
<dbReference type="HAMAP" id="MF_01347">
    <property type="entry name" value="ATP_synth_beta_bact"/>
    <property type="match status" value="1"/>
</dbReference>
<dbReference type="InterPro" id="IPR003593">
    <property type="entry name" value="AAA+_ATPase"/>
</dbReference>
<dbReference type="InterPro" id="IPR017691">
    <property type="entry name" value="Alt_ATPase_F1_bsu"/>
</dbReference>
<dbReference type="InterPro" id="IPR055190">
    <property type="entry name" value="ATP-synt_VA_C"/>
</dbReference>
<dbReference type="InterPro" id="IPR005722">
    <property type="entry name" value="ATP_synth_F1_bsu"/>
</dbReference>
<dbReference type="InterPro" id="IPR020003">
    <property type="entry name" value="ATPase_a/bsu_AS"/>
</dbReference>
<dbReference type="InterPro" id="IPR050053">
    <property type="entry name" value="ATPase_alpha/beta_chains"/>
</dbReference>
<dbReference type="InterPro" id="IPR004100">
    <property type="entry name" value="ATPase_F1/V1/A1_a/bsu_N"/>
</dbReference>
<dbReference type="InterPro" id="IPR036121">
    <property type="entry name" value="ATPase_F1/V1/A1_a/bsu_N_sf"/>
</dbReference>
<dbReference type="InterPro" id="IPR000194">
    <property type="entry name" value="ATPase_F1/V1/A1_a/bsu_nucl-bd"/>
</dbReference>
<dbReference type="InterPro" id="IPR024034">
    <property type="entry name" value="ATPase_F1/V1_b/a_C"/>
</dbReference>
<dbReference type="InterPro" id="IPR027417">
    <property type="entry name" value="P-loop_NTPase"/>
</dbReference>
<dbReference type="InterPro" id="IPR002885">
    <property type="entry name" value="Pentatricopeptide_rpt"/>
</dbReference>
<dbReference type="NCBIfam" id="TIGR03305">
    <property type="entry name" value="alt_F1F0_F1_bet"/>
    <property type="match status" value="1"/>
</dbReference>
<dbReference type="NCBIfam" id="TIGR01039">
    <property type="entry name" value="atpD"/>
    <property type="match status" value="1"/>
</dbReference>
<dbReference type="PANTHER" id="PTHR15184">
    <property type="entry name" value="ATP SYNTHASE"/>
    <property type="match status" value="1"/>
</dbReference>
<dbReference type="PANTHER" id="PTHR15184:SF71">
    <property type="entry name" value="ATP SYNTHASE SUBUNIT BETA, MITOCHONDRIAL"/>
    <property type="match status" value="1"/>
</dbReference>
<dbReference type="Pfam" id="PF00006">
    <property type="entry name" value="ATP-synt_ab"/>
    <property type="match status" value="1"/>
</dbReference>
<dbReference type="Pfam" id="PF02874">
    <property type="entry name" value="ATP-synt_ab_N"/>
    <property type="match status" value="1"/>
</dbReference>
<dbReference type="Pfam" id="PF22919">
    <property type="entry name" value="ATP-synt_VA_C"/>
    <property type="match status" value="1"/>
</dbReference>
<dbReference type="SMART" id="SM00382">
    <property type="entry name" value="AAA"/>
    <property type="match status" value="1"/>
</dbReference>
<dbReference type="SUPFAM" id="SSF47917">
    <property type="entry name" value="C-terminal domain of alpha and beta subunits of F1 ATP synthase"/>
    <property type="match status" value="1"/>
</dbReference>
<dbReference type="SUPFAM" id="SSF50615">
    <property type="entry name" value="N-terminal domain of alpha and beta subunits of F1 ATP synthase"/>
    <property type="match status" value="1"/>
</dbReference>
<dbReference type="SUPFAM" id="SSF52540">
    <property type="entry name" value="P-loop containing nucleoside triphosphate hydrolases"/>
    <property type="match status" value="1"/>
</dbReference>
<dbReference type="PROSITE" id="PS00152">
    <property type="entry name" value="ATPASE_ALPHA_BETA"/>
    <property type="match status" value="1"/>
</dbReference>
<feature type="chain" id="PRO_0000339576" description="ATP synthase subunit beta 1">
    <location>
        <begin position="1"/>
        <end position="485"/>
    </location>
</feature>
<feature type="binding site" evidence="1">
    <location>
        <begin position="157"/>
        <end position="164"/>
    </location>
    <ligand>
        <name>ATP</name>
        <dbReference type="ChEBI" id="CHEBI:30616"/>
    </ligand>
</feature>
<proteinExistence type="inferred from homology"/>
<evidence type="ECO:0000255" key="1">
    <source>
        <dbReference type="HAMAP-Rule" id="MF_01347"/>
    </source>
</evidence>
<accession>A1SS55</accession>
<protein>
    <recommendedName>
        <fullName evidence="1">ATP synthase subunit beta 1</fullName>
        <ecNumber evidence="1">7.1.2.2</ecNumber>
    </recommendedName>
    <alternativeName>
        <fullName evidence="1">ATP synthase F1 sector subunit beta 1</fullName>
    </alternativeName>
    <alternativeName>
        <fullName evidence="1">F-ATPase subunit beta 1</fullName>
    </alternativeName>
</protein>